<gene>
    <name type="ORF">DDB_G0292534</name>
</gene>
<protein>
    <recommendedName>
        <fullName>Putative uncharacterized protein DDB_G0292534</fullName>
    </recommendedName>
</protein>
<accession>Q54D79</accession>
<sequence>MSSIDYLVNNCDYKVSAFSLNDGQRSNSIQPVSQNDQEMCYLGDIDYGCTIIYPNGKKH</sequence>
<name>Y9752_DICDI</name>
<proteinExistence type="predicted"/>
<keyword id="KW-1185">Reference proteome</keyword>
<organism>
    <name type="scientific">Dictyostelium discoideum</name>
    <name type="common">Social amoeba</name>
    <dbReference type="NCBI Taxonomy" id="44689"/>
    <lineage>
        <taxon>Eukaryota</taxon>
        <taxon>Amoebozoa</taxon>
        <taxon>Evosea</taxon>
        <taxon>Eumycetozoa</taxon>
        <taxon>Dictyostelia</taxon>
        <taxon>Dictyosteliales</taxon>
        <taxon>Dictyosteliaceae</taxon>
        <taxon>Dictyostelium</taxon>
    </lineage>
</organism>
<reference key="1">
    <citation type="journal article" date="2005" name="Nature">
        <title>The genome of the social amoeba Dictyostelium discoideum.</title>
        <authorList>
            <person name="Eichinger L."/>
            <person name="Pachebat J.A."/>
            <person name="Gloeckner G."/>
            <person name="Rajandream M.A."/>
            <person name="Sucgang R."/>
            <person name="Berriman M."/>
            <person name="Song J."/>
            <person name="Olsen R."/>
            <person name="Szafranski K."/>
            <person name="Xu Q."/>
            <person name="Tunggal B."/>
            <person name="Kummerfeld S."/>
            <person name="Madera M."/>
            <person name="Konfortov B.A."/>
            <person name="Rivero F."/>
            <person name="Bankier A.T."/>
            <person name="Lehmann R."/>
            <person name="Hamlin N."/>
            <person name="Davies R."/>
            <person name="Gaudet P."/>
            <person name="Fey P."/>
            <person name="Pilcher K."/>
            <person name="Chen G."/>
            <person name="Saunders D."/>
            <person name="Sodergren E.J."/>
            <person name="Davis P."/>
            <person name="Kerhornou A."/>
            <person name="Nie X."/>
            <person name="Hall N."/>
            <person name="Anjard C."/>
            <person name="Hemphill L."/>
            <person name="Bason N."/>
            <person name="Farbrother P."/>
            <person name="Desany B."/>
            <person name="Just E."/>
            <person name="Morio T."/>
            <person name="Rost R."/>
            <person name="Churcher C.M."/>
            <person name="Cooper J."/>
            <person name="Haydock S."/>
            <person name="van Driessche N."/>
            <person name="Cronin A."/>
            <person name="Goodhead I."/>
            <person name="Muzny D.M."/>
            <person name="Mourier T."/>
            <person name="Pain A."/>
            <person name="Lu M."/>
            <person name="Harper D."/>
            <person name="Lindsay R."/>
            <person name="Hauser H."/>
            <person name="James K.D."/>
            <person name="Quiles M."/>
            <person name="Madan Babu M."/>
            <person name="Saito T."/>
            <person name="Buchrieser C."/>
            <person name="Wardroper A."/>
            <person name="Felder M."/>
            <person name="Thangavelu M."/>
            <person name="Johnson D."/>
            <person name="Knights A."/>
            <person name="Loulseged H."/>
            <person name="Mungall K.L."/>
            <person name="Oliver K."/>
            <person name="Price C."/>
            <person name="Quail M.A."/>
            <person name="Urushihara H."/>
            <person name="Hernandez J."/>
            <person name="Rabbinowitsch E."/>
            <person name="Steffen D."/>
            <person name="Sanders M."/>
            <person name="Ma J."/>
            <person name="Kohara Y."/>
            <person name="Sharp S."/>
            <person name="Simmonds M.N."/>
            <person name="Spiegler S."/>
            <person name="Tivey A."/>
            <person name="Sugano S."/>
            <person name="White B."/>
            <person name="Walker D."/>
            <person name="Woodward J.R."/>
            <person name="Winckler T."/>
            <person name="Tanaka Y."/>
            <person name="Shaulsky G."/>
            <person name="Schleicher M."/>
            <person name="Weinstock G.M."/>
            <person name="Rosenthal A."/>
            <person name="Cox E.C."/>
            <person name="Chisholm R.L."/>
            <person name="Gibbs R.A."/>
            <person name="Loomis W.F."/>
            <person name="Platzer M."/>
            <person name="Kay R.R."/>
            <person name="Williams J.G."/>
            <person name="Dear P.H."/>
            <person name="Noegel A.A."/>
            <person name="Barrell B.G."/>
            <person name="Kuspa A."/>
        </authorList>
    </citation>
    <scope>NUCLEOTIDE SEQUENCE [LARGE SCALE GENOMIC DNA]</scope>
    <source>
        <strain>AX4</strain>
    </source>
</reference>
<dbReference type="EMBL" id="AAFI02000190">
    <property type="protein sequence ID" value="EAL61246.1"/>
    <property type="molecule type" value="Genomic_DNA"/>
</dbReference>
<dbReference type="RefSeq" id="XP_629617.1">
    <property type="nucleotide sequence ID" value="XM_629615.1"/>
</dbReference>
<dbReference type="PaxDb" id="44689-DDB0219752"/>
<dbReference type="EnsemblProtists" id="EAL61246">
    <property type="protein sequence ID" value="EAL61246"/>
    <property type="gene ID" value="DDB_G0292534"/>
</dbReference>
<dbReference type="GeneID" id="8628680"/>
<dbReference type="KEGG" id="ddi:DDB_G0292534"/>
<dbReference type="dictyBase" id="DDB_G0292534"/>
<dbReference type="VEuPathDB" id="AmoebaDB:DDB_G0292534"/>
<dbReference type="HOGENOM" id="CLU_2965692_0_0_1"/>
<dbReference type="InParanoid" id="Q54D79"/>
<dbReference type="PRO" id="PR:Q54D79"/>
<dbReference type="Proteomes" id="UP000002195">
    <property type="component" value="Chromosome 6"/>
</dbReference>
<feature type="chain" id="PRO_0000344435" description="Putative uncharacterized protein DDB_G0292534">
    <location>
        <begin position="1"/>
        <end position="59"/>
    </location>
</feature>